<reference evidence="4" key="1">
    <citation type="journal article" date="2007" name="Nature">
        <title>Evolution of genes and genomes on the Drosophila phylogeny.</title>
        <authorList>
            <consortium name="Drosophila 12 genomes consortium"/>
        </authorList>
    </citation>
    <scope>NUCLEOTIDE SEQUENCE [LARGE SCALE GENOMIC DNA]</scope>
    <source>
        <strain evidence="4">Tucson 15081-1352.22</strain>
    </source>
</reference>
<gene>
    <name evidence="1" type="primary">shep</name>
    <name type="ORF">GI11982</name>
</gene>
<comment type="function">
    <text evidence="1">Has a role in the perception of gravity.</text>
</comment>
<comment type="miscellaneous">
    <text>Named after Alan Bartlett Shepard, Jr. who was the second person and the first American in space and the fifth person to walk on the moon.</text>
</comment>
<proteinExistence type="inferred from homology"/>
<organism>
    <name type="scientific">Drosophila mojavensis</name>
    <name type="common">Fruit fly</name>
    <dbReference type="NCBI Taxonomy" id="7230"/>
    <lineage>
        <taxon>Eukaryota</taxon>
        <taxon>Metazoa</taxon>
        <taxon>Ecdysozoa</taxon>
        <taxon>Arthropoda</taxon>
        <taxon>Hexapoda</taxon>
        <taxon>Insecta</taxon>
        <taxon>Pterygota</taxon>
        <taxon>Neoptera</taxon>
        <taxon>Endopterygota</taxon>
        <taxon>Diptera</taxon>
        <taxon>Brachycera</taxon>
        <taxon>Muscomorpha</taxon>
        <taxon>Ephydroidea</taxon>
        <taxon>Drosophilidae</taxon>
        <taxon>Drosophila</taxon>
    </lineage>
</organism>
<keyword id="KW-0597">Phosphoprotein</keyword>
<keyword id="KW-1185">Reference proteome</keyword>
<keyword id="KW-0677">Repeat</keyword>
<keyword id="KW-0694">RNA-binding</keyword>
<dbReference type="EMBL" id="CH933809">
    <property type="protein sequence ID" value="EDW18623.1"/>
    <property type="molecule type" value="Genomic_DNA"/>
</dbReference>
<dbReference type="RefSeq" id="XP_002008147.2">
    <property type="nucleotide sequence ID" value="XM_002008111.2"/>
</dbReference>
<dbReference type="SMR" id="B4KX02"/>
<dbReference type="FunCoup" id="B4KX02">
    <property type="interactions" value="464"/>
</dbReference>
<dbReference type="eggNOG" id="KOG4733">
    <property type="taxonomic scope" value="Eukaryota"/>
</dbReference>
<dbReference type="HOGENOM" id="CLU_016278_1_0_1"/>
<dbReference type="InParanoid" id="B4KX02"/>
<dbReference type="OMA" id="FESPACA"/>
<dbReference type="OrthoDB" id="271725at2759"/>
<dbReference type="PhylomeDB" id="B4KX02"/>
<dbReference type="Proteomes" id="UP000009192">
    <property type="component" value="Unassembled WGS sequence"/>
</dbReference>
<dbReference type="GO" id="GO:1990904">
    <property type="term" value="C:ribonucleoprotein complex"/>
    <property type="evidence" value="ECO:0007669"/>
    <property type="project" value="InterPro"/>
</dbReference>
<dbReference type="GO" id="GO:0003723">
    <property type="term" value="F:RNA binding"/>
    <property type="evidence" value="ECO:0007669"/>
    <property type="project" value="UniProtKB-KW"/>
</dbReference>
<dbReference type="GO" id="GO:0008344">
    <property type="term" value="P:adult locomotory behavior"/>
    <property type="evidence" value="ECO:0007669"/>
    <property type="project" value="EnsemblMetazoa"/>
</dbReference>
<dbReference type="GO" id="GO:0008050">
    <property type="term" value="P:female courtship behavior"/>
    <property type="evidence" value="ECO:0007669"/>
    <property type="project" value="EnsemblMetazoa"/>
</dbReference>
<dbReference type="GO" id="GO:0042332">
    <property type="term" value="P:gravitaxis"/>
    <property type="evidence" value="ECO:0007669"/>
    <property type="project" value="EnsemblMetazoa"/>
</dbReference>
<dbReference type="GO" id="GO:0007552">
    <property type="term" value="P:metamorphosis"/>
    <property type="evidence" value="ECO:0007669"/>
    <property type="project" value="EnsemblMetazoa"/>
</dbReference>
<dbReference type="GO" id="GO:0016322">
    <property type="term" value="P:neuron remodeling"/>
    <property type="evidence" value="ECO:0007669"/>
    <property type="project" value="EnsemblMetazoa"/>
</dbReference>
<dbReference type="GO" id="GO:0009629">
    <property type="term" value="P:response to gravity"/>
    <property type="evidence" value="ECO:0000250"/>
    <property type="project" value="UniProtKB"/>
</dbReference>
<dbReference type="CDD" id="cd12243">
    <property type="entry name" value="RRM1_MSSP"/>
    <property type="match status" value="1"/>
</dbReference>
<dbReference type="CDD" id="cd12244">
    <property type="entry name" value="RRM2_MSSP"/>
    <property type="match status" value="1"/>
</dbReference>
<dbReference type="FunFam" id="3.30.70.330:FF:000169">
    <property type="entry name" value="protein alan shepard isoform X4"/>
    <property type="match status" value="1"/>
</dbReference>
<dbReference type="FunFam" id="3.30.70.330:FF:000491">
    <property type="entry name" value="protein alan shepard isoform X6"/>
    <property type="match status" value="1"/>
</dbReference>
<dbReference type="Gene3D" id="3.30.70.330">
    <property type="match status" value="2"/>
</dbReference>
<dbReference type="InterPro" id="IPR002343">
    <property type="entry name" value="Hud_Sxl_RNA"/>
</dbReference>
<dbReference type="InterPro" id="IPR012677">
    <property type="entry name" value="Nucleotide-bd_a/b_plait_sf"/>
</dbReference>
<dbReference type="InterPro" id="IPR035979">
    <property type="entry name" value="RBD_domain_sf"/>
</dbReference>
<dbReference type="InterPro" id="IPR000504">
    <property type="entry name" value="RRM_dom"/>
</dbReference>
<dbReference type="PANTHER" id="PTHR24012">
    <property type="entry name" value="RNA BINDING PROTEIN"/>
    <property type="match status" value="1"/>
</dbReference>
<dbReference type="Pfam" id="PF00076">
    <property type="entry name" value="RRM_1"/>
    <property type="match status" value="2"/>
</dbReference>
<dbReference type="PRINTS" id="PR00961">
    <property type="entry name" value="HUDSXLRNA"/>
</dbReference>
<dbReference type="SMART" id="SM00360">
    <property type="entry name" value="RRM"/>
    <property type="match status" value="2"/>
</dbReference>
<dbReference type="SUPFAM" id="SSF54928">
    <property type="entry name" value="RNA-binding domain, RBD"/>
    <property type="match status" value="1"/>
</dbReference>
<dbReference type="PROSITE" id="PS50102">
    <property type="entry name" value="RRM"/>
    <property type="match status" value="2"/>
</dbReference>
<protein>
    <recommendedName>
        <fullName>Protein alan shepard</fullName>
    </recommendedName>
</protein>
<name>SHEP_DROMO</name>
<feature type="chain" id="PRO_0000379500" description="Protein alan shepard">
    <location>
        <begin position="1"/>
        <end position="592"/>
    </location>
</feature>
<feature type="domain" description="RRM 1" evidence="2">
    <location>
        <begin position="229"/>
        <end position="307"/>
    </location>
</feature>
<feature type="domain" description="RRM 2" evidence="2">
    <location>
        <begin position="319"/>
        <end position="398"/>
    </location>
</feature>
<feature type="region of interest" description="Disordered" evidence="3">
    <location>
        <begin position="1"/>
        <end position="68"/>
    </location>
</feature>
<feature type="region of interest" description="Disordered" evidence="3">
    <location>
        <begin position="162"/>
        <end position="224"/>
    </location>
</feature>
<feature type="region of interest" description="Disordered" evidence="3">
    <location>
        <begin position="565"/>
        <end position="592"/>
    </location>
</feature>
<feature type="compositionally biased region" description="Gly residues" evidence="3">
    <location>
        <begin position="18"/>
        <end position="28"/>
    </location>
</feature>
<feature type="compositionally biased region" description="Polar residues" evidence="3">
    <location>
        <begin position="36"/>
        <end position="54"/>
    </location>
</feature>
<feature type="compositionally biased region" description="Low complexity" evidence="3">
    <location>
        <begin position="55"/>
        <end position="64"/>
    </location>
</feature>
<feature type="compositionally biased region" description="Low complexity" evidence="3">
    <location>
        <begin position="176"/>
        <end position="224"/>
    </location>
</feature>
<feature type="modified residue" description="Phosphotyrosine" evidence="1">
    <location>
        <position position="124"/>
    </location>
</feature>
<feature type="modified residue" description="Phosphotyrosine" evidence="1">
    <location>
        <position position="140"/>
    </location>
</feature>
<evidence type="ECO:0000250" key="1">
    <source>
        <dbReference type="UniProtKB" id="Q8MSV2"/>
    </source>
</evidence>
<evidence type="ECO:0000255" key="2">
    <source>
        <dbReference type="PROSITE-ProRule" id="PRU00176"/>
    </source>
</evidence>
<evidence type="ECO:0000256" key="3">
    <source>
        <dbReference type="SAM" id="MobiDB-lite"/>
    </source>
</evidence>
<evidence type="ECO:0000312" key="4">
    <source>
        <dbReference type="EMBL" id="EDW18623.1"/>
    </source>
</evidence>
<sequence>MGGPHHQHQQHQQQQQVVGGGNGHGGGAPVHMRAPPNSQQLPPQMPRSQNYANGSSSAASVAAAPPTPRSAFPGAPLTASAVALKGAIPQRPPAMTSPAAAAAGAALAAGAPYRGATSWTPQGYAPAAAAAAAAVAQQAYRYTAPLPQPAYAAYTPHTATTPATTTYGQRVPTAASPSNTNSSSSSNTGSQSGTLSTSLSNTTNTNTTMGPNGTAQNQNQQGGEQLSKTNLYIRGLQQGTTDKDLINMCAQYGTIISTKAILDKTTNKCKGYGFVDFEQPAYAEGAVKGLQAKGVQAQMAKVGIWVLHRPAIQQEQDPTNLYIANLPPHFKETDLEAMLAKFGQVVSTRILRDQQMNSKGVGFARMESREKCEQIIQMFNGNTITGAKDPLLVKFADGGPKKKNLFKTPDPNARAWRDVSAEGIPVAYDPTMQQNGVSVNVGTPIGVPYSRFGAPQVGGYPVAGSQWIPGYMMTQPITQVDDQYSSSALQYMQMAAAPQLGVTSYKPQEVNQVPARGISMMVSGDTAVPYGTMMPQLATLQIGNSYISPTYPYYAPPPTILPTMPMTDSEQASTAASPDEAYTQYPHQAAPK</sequence>
<accession>B4KX02</accession>